<protein>
    <recommendedName>
        <fullName evidence="1">DNA-directed RNA polymerase subunit alpha</fullName>
        <shortName evidence="1">PEP</shortName>
        <ecNumber evidence="1">2.7.7.6</ecNumber>
    </recommendedName>
    <alternativeName>
        <fullName evidence="1">Plastid-encoded RNA polymerase subunit alpha</fullName>
        <shortName evidence="1">RNA polymerase subunit alpha</shortName>
    </alternativeName>
</protein>
<geneLocation type="chloroplast"/>
<gene>
    <name evidence="1" type="primary">rpoA</name>
</gene>
<proteinExistence type="inferred from homology"/>
<feature type="chain" id="PRO_0000275688" description="DNA-directed RNA polymerase subunit alpha">
    <location>
        <begin position="1"/>
        <end position="339"/>
    </location>
</feature>
<feature type="region of interest" description="Alpha N-terminal domain (alpha-NTD)" evidence="1">
    <location>
        <begin position="1"/>
        <end position="235"/>
    </location>
</feature>
<feature type="region of interest" description="Alpha C-terminal domain (alpha-CTD)" evidence="1">
    <location>
        <begin position="267"/>
        <end position="339"/>
    </location>
</feature>
<comment type="function">
    <text evidence="1">DNA-dependent RNA polymerase catalyzes the transcription of DNA into RNA using the four ribonucleoside triphosphates as substrates.</text>
</comment>
<comment type="catalytic activity">
    <reaction evidence="1">
        <text>RNA(n) + a ribonucleoside 5'-triphosphate = RNA(n+1) + diphosphate</text>
        <dbReference type="Rhea" id="RHEA:21248"/>
        <dbReference type="Rhea" id="RHEA-COMP:14527"/>
        <dbReference type="Rhea" id="RHEA-COMP:17342"/>
        <dbReference type="ChEBI" id="CHEBI:33019"/>
        <dbReference type="ChEBI" id="CHEBI:61557"/>
        <dbReference type="ChEBI" id="CHEBI:140395"/>
        <dbReference type="EC" id="2.7.7.6"/>
    </reaction>
</comment>
<comment type="subunit">
    <text evidence="1">In plastids the minimal PEP RNA polymerase catalytic core is composed of four subunits: alpha, beta, beta', and beta''. When a (nuclear-encoded) sigma factor is associated with the core the holoenzyme is formed, which can initiate transcription.</text>
</comment>
<comment type="subcellular location">
    <subcellularLocation>
        <location>Plastid</location>
        <location>Chloroplast</location>
    </subcellularLocation>
</comment>
<comment type="domain">
    <text evidence="1">The N-terminal domain is essential for RNAP assembly and basal transcription, whereas the C-terminal domain is involved in interaction with transcriptional regulators and with upstream promoter elements.</text>
</comment>
<comment type="similarity">
    <text evidence="1">Belongs to the RNA polymerase alpha chain family.</text>
</comment>
<organism>
    <name type="scientific">Drimys granadensis</name>
    <dbReference type="NCBI Taxonomy" id="224735"/>
    <lineage>
        <taxon>Eukaryota</taxon>
        <taxon>Viridiplantae</taxon>
        <taxon>Streptophyta</taxon>
        <taxon>Embryophyta</taxon>
        <taxon>Tracheophyta</taxon>
        <taxon>Spermatophyta</taxon>
        <taxon>Magnoliopsida</taxon>
        <taxon>Magnoliidae</taxon>
        <taxon>Canellales</taxon>
        <taxon>Winteraceae</taxon>
        <taxon>Drimys</taxon>
    </lineage>
</organism>
<keyword id="KW-0150">Chloroplast</keyword>
<keyword id="KW-0240">DNA-directed RNA polymerase</keyword>
<keyword id="KW-0548">Nucleotidyltransferase</keyword>
<keyword id="KW-0934">Plastid</keyword>
<keyword id="KW-0804">Transcription</keyword>
<keyword id="KW-0808">Transferase</keyword>
<accession>Q06GW5</accession>
<reference key="1">
    <citation type="journal article" date="2006" name="BMC Evol. Biol.">
        <title>Complete plastid genome sequences of Drimys, Liriodendron, and Piper: implications for the phylogenetic relationships of magnoliids.</title>
        <authorList>
            <person name="Cai Z."/>
            <person name="Penaflor C."/>
            <person name="Kuehl J.V."/>
            <person name="Leebens-Mack J."/>
            <person name="Carlson J.E."/>
            <person name="dePamphilis C.W."/>
            <person name="Boore J.L."/>
            <person name="Jansen R.K."/>
        </authorList>
    </citation>
    <scope>NUCLEOTIDE SEQUENCE [LARGE SCALE GENOMIC DNA]</scope>
</reference>
<evidence type="ECO:0000255" key="1">
    <source>
        <dbReference type="HAMAP-Rule" id="MF_00059"/>
    </source>
</evidence>
<sequence length="339" mass="38650">MVREEVAVSTRTLQWKCVESRTDSKRLSYGRFILSPLMKGQADMIGIAMRRALLGEIEGTCITRAKSDKIPHEYSTIVGIEESVHQILMNLKEIVLRSNLYGTCDASIFVRGPRCVTAQDIISPPSVKMVDTTQHIASLTEPIDLCIGLQIERDRGYRMKTPNNDQDGSYPIPIEAVSMPVRNANHSIHSYGNGNEKQEILFLEIWTNGSLTPKEALHEASHNLIDLFIPFLHGEEEDINLEDSLNRGTLPFFTFQDKLANLRKNKKAIALECIFIDQSELPPRTYNCLKRSNIHTLLDLLSNSQEDLMRIEHLRIEDVKRILDILQKHFTIDLPKNKF</sequence>
<name>RPOA_DRIGR</name>
<dbReference type="EC" id="2.7.7.6" evidence="1"/>
<dbReference type="EMBL" id="DQ887676">
    <property type="protein sequence ID" value="ABH88328.1"/>
    <property type="molecule type" value="Genomic_DNA"/>
</dbReference>
<dbReference type="RefSeq" id="YP_784418.1">
    <property type="nucleotide sequence ID" value="NC_008456.1"/>
</dbReference>
<dbReference type="SMR" id="Q06GW5"/>
<dbReference type="GeneID" id="4363604"/>
<dbReference type="GO" id="GO:0009507">
    <property type="term" value="C:chloroplast"/>
    <property type="evidence" value="ECO:0007669"/>
    <property type="project" value="UniProtKB-SubCell"/>
</dbReference>
<dbReference type="GO" id="GO:0000428">
    <property type="term" value="C:DNA-directed RNA polymerase complex"/>
    <property type="evidence" value="ECO:0007669"/>
    <property type="project" value="UniProtKB-KW"/>
</dbReference>
<dbReference type="GO" id="GO:0005739">
    <property type="term" value="C:mitochondrion"/>
    <property type="evidence" value="ECO:0007669"/>
    <property type="project" value="GOC"/>
</dbReference>
<dbReference type="GO" id="GO:0003677">
    <property type="term" value="F:DNA binding"/>
    <property type="evidence" value="ECO:0007669"/>
    <property type="project" value="UniProtKB-UniRule"/>
</dbReference>
<dbReference type="GO" id="GO:0003899">
    <property type="term" value="F:DNA-directed RNA polymerase activity"/>
    <property type="evidence" value="ECO:0007669"/>
    <property type="project" value="UniProtKB-UniRule"/>
</dbReference>
<dbReference type="GO" id="GO:0046983">
    <property type="term" value="F:protein dimerization activity"/>
    <property type="evidence" value="ECO:0007669"/>
    <property type="project" value="InterPro"/>
</dbReference>
<dbReference type="GO" id="GO:0006351">
    <property type="term" value="P:DNA-templated transcription"/>
    <property type="evidence" value="ECO:0007669"/>
    <property type="project" value="UniProtKB-UniRule"/>
</dbReference>
<dbReference type="CDD" id="cd06928">
    <property type="entry name" value="RNAP_alpha_NTD"/>
    <property type="match status" value="1"/>
</dbReference>
<dbReference type="FunFam" id="1.10.150.20:FF:000021">
    <property type="entry name" value="DNA-directed RNA polymerase subunit alpha"/>
    <property type="match status" value="1"/>
</dbReference>
<dbReference type="FunFam" id="2.170.120.12:FF:000001">
    <property type="entry name" value="DNA-directed RNA polymerase subunit alpha"/>
    <property type="match status" value="1"/>
</dbReference>
<dbReference type="Gene3D" id="1.10.150.20">
    <property type="entry name" value="5' to 3' exonuclease, C-terminal subdomain"/>
    <property type="match status" value="1"/>
</dbReference>
<dbReference type="Gene3D" id="2.170.120.12">
    <property type="entry name" value="DNA-directed RNA polymerase, insert domain"/>
    <property type="match status" value="1"/>
</dbReference>
<dbReference type="Gene3D" id="3.30.1360.10">
    <property type="entry name" value="RNA polymerase, RBP11-like subunit"/>
    <property type="match status" value="1"/>
</dbReference>
<dbReference type="HAMAP" id="MF_00059">
    <property type="entry name" value="RNApol_bact_RpoA"/>
    <property type="match status" value="1"/>
</dbReference>
<dbReference type="InterPro" id="IPR011262">
    <property type="entry name" value="DNA-dir_RNA_pol_insert"/>
</dbReference>
<dbReference type="InterPro" id="IPR011263">
    <property type="entry name" value="DNA-dir_RNA_pol_RpoA/D/Rpb3"/>
</dbReference>
<dbReference type="InterPro" id="IPR011773">
    <property type="entry name" value="DNA-dir_RpoA"/>
</dbReference>
<dbReference type="InterPro" id="IPR036603">
    <property type="entry name" value="RBP11-like"/>
</dbReference>
<dbReference type="InterPro" id="IPR011260">
    <property type="entry name" value="RNAP_asu_C"/>
</dbReference>
<dbReference type="InterPro" id="IPR036643">
    <property type="entry name" value="RNApol_insert_sf"/>
</dbReference>
<dbReference type="NCBIfam" id="TIGR02027">
    <property type="entry name" value="rpoA"/>
    <property type="match status" value="1"/>
</dbReference>
<dbReference type="Pfam" id="PF01000">
    <property type="entry name" value="RNA_pol_A_bac"/>
    <property type="match status" value="1"/>
</dbReference>
<dbReference type="Pfam" id="PF03118">
    <property type="entry name" value="RNA_pol_A_CTD"/>
    <property type="match status" value="1"/>
</dbReference>
<dbReference type="Pfam" id="PF01193">
    <property type="entry name" value="RNA_pol_L"/>
    <property type="match status" value="1"/>
</dbReference>
<dbReference type="SMART" id="SM00662">
    <property type="entry name" value="RPOLD"/>
    <property type="match status" value="1"/>
</dbReference>
<dbReference type="SUPFAM" id="SSF47789">
    <property type="entry name" value="C-terminal domain of RNA polymerase alpha subunit"/>
    <property type="match status" value="1"/>
</dbReference>
<dbReference type="SUPFAM" id="SSF56553">
    <property type="entry name" value="Insert subdomain of RNA polymerase alpha subunit"/>
    <property type="match status" value="1"/>
</dbReference>
<dbReference type="SUPFAM" id="SSF55257">
    <property type="entry name" value="RBP11-like subunits of RNA polymerase"/>
    <property type="match status" value="1"/>
</dbReference>